<gene>
    <name evidence="1" type="primary">cysG</name>
    <name type="ordered locus">PLES_24941</name>
</gene>
<keyword id="KW-0169">Cobalamin biosynthesis</keyword>
<keyword id="KW-0456">Lyase</keyword>
<keyword id="KW-0489">Methyltransferase</keyword>
<keyword id="KW-0511">Multifunctional enzyme</keyword>
<keyword id="KW-0520">NAD</keyword>
<keyword id="KW-0560">Oxidoreductase</keyword>
<keyword id="KW-0597">Phosphoprotein</keyword>
<keyword id="KW-0627">Porphyrin biosynthesis</keyword>
<keyword id="KW-0949">S-adenosyl-L-methionine</keyword>
<keyword id="KW-0808">Transferase</keyword>
<protein>
    <recommendedName>
        <fullName evidence="1">Siroheme synthase</fullName>
    </recommendedName>
    <domain>
        <recommendedName>
            <fullName evidence="1">Uroporphyrinogen-III C-methyltransferase</fullName>
            <shortName evidence="1">Urogen III methylase</shortName>
            <ecNumber evidence="1">2.1.1.107</ecNumber>
        </recommendedName>
        <alternativeName>
            <fullName evidence="1">SUMT</fullName>
        </alternativeName>
        <alternativeName>
            <fullName evidence="1">Uroporphyrinogen III methylase</fullName>
            <shortName evidence="1">UROM</shortName>
        </alternativeName>
    </domain>
    <domain>
        <recommendedName>
            <fullName evidence="1">Precorrin-2 dehydrogenase</fullName>
            <ecNumber evidence="1">1.3.1.76</ecNumber>
        </recommendedName>
    </domain>
    <domain>
        <recommendedName>
            <fullName evidence="1">Sirohydrochlorin ferrochelatase</fullName>
            <ecNumber evidence="1">4.99.1.4</ecNumber>
        </recommendedName>
    </domain>
</protein>
<proteinExistence type="inferred from homology"/>
<evidence type="ECO:0000255" key="1">
    <source>
        <dbReference type="HAMAP-Rule" id="MF_01646"/>
    </source>
</evidence>
<sequence>MDFLPLFHSLQGRLALVVGGGEVALRKARLLADAGARLRVVAPQIHIELRHLVEQGGGELLERDYQDGDQPGCVLIIAATDDEPLNAEVSRAANARGIPVNVVDAPALCSVIFPAIVDRSPLVVAVSSGGDAPVLARLIRAKLETWIPSTYGQLAGLASRFRHRVKELLPDLQQRRVFWENLFQGEIAERVLAGRPAEAERLLEEHLAGGLAHIATGEVYLVGAGPGDPDLLTFRALRLMQQADVVLYDRLVAPSILELCRRDAERLYVGKRRAEHAVPQDRINRLLVELASQGKRVLRLKGGDPFIFGRGGEEIDELAAHGIPFQVVPGITAASGCAAYAGIPLTHRDHAQSVRFVTGHLKDGTTDLPWQDLVAPGQTLVFYMGLVGLPVICEQLVAHGRSAQTPAALIQQGTTAQQRVFTGTLENLPQLVAEHEVHAPTLVIVGEVVQLRDKLAWFEGAREDA</sequence>
<accession>B7UW11</accession>
<reference key="1">
    <citation type="journal article" date="2009" name="Genome Res.">
        <title>Newly introduced genomic prophage islands are critical determinants of in vivo competitiveness in the Liverpool epidemic strain of Pseudomonas aeruginosa.</title>
        <authorList>
            <person name="Winstanley C."/>
            <person name="Langille M.G.I."/>
            <person name="Fothergill J.L."/>
            <person name="Kukavica-Ibrulj I."/>
            <person name="Paradis-Bleau C."/>
            <person name="Sanschagrin F."/>
            <person name="Thomson N.R."/>
            <person name="Winsor G.L."/>
            <person name="Quail M.A."/>
            <person name="Lennard N."/>
            <person name="Bignell A."/>
            <person name="Clarke L."/>
            <person name="Seeger K."/>
            <person name="Saunders D."/>
            <person name="Harris D."/>
            <person name="Parkhill J."/>
            <person name="Hancock R.E.W."/>
            <person name="Brinkman F.S.L."/>
            <person name="Levesque R.C."/>
        </authorList>
    </citation>
    <scope>NUCLEOTIDE SEQUENCE [LARGE SCALE GENOMIC DNA]</scope>
    <source>
        <strain>LESB58</strain>
    </source>
</reference>
<comment type="function">
    <text evidence="1">Multifunctional enzyme that catalyzes the SAM-dependent methylations of uroporphyrinogen III at position C-2 and C-7 to form precorrin-2 via precorrin-1. Then it catalyzes the NAD-dependent ring dehydrogenation of precorrin-2 to yield sirohydrochlorin. Finally, it catalyzes the ferrochelation of sirohydrochlorin to yield siroheme.</text>
</comment>
<comment type="catalytic activity">
    <reaction evidence="1">
        <text>uroporphyrinogen III + 2 S-adenosyl-L-methionine = precorrin-2 + 2 S-adenosyl-L-homocysteine + H(+)</text>
        <dbReference type="Rhea" id="RHEA:32459"/>
        <dbReference type="ChEBI" id="CHEBI:15378"/>
        <dbReference type="ChEBI" id="CHEBI:57308"/>
        <dbReference type="ChEBI" id="CHEBI:57856"/>
        <dbReference type="ChEBI" id="CHEBI:58827"/>
        <dbReference type="ChEBI" id="CHEBI:59789"/>
        <dbReference type="EC" id="2.1.1.107"/>
    </reaction>
</comment>
<comment type="catalytic activity">
    <reaction evidence="1">
        <text>precorrin-2 + NAD(+) = sirohydrochlorin + NADH + 2 H(+)</text>
        <dbReference type="Rhea" id="RHEA:15613"/>
        <dbReference type="ChEBI" id="CHEBI:15378"/>
        <dbReference type="ChEBI" id="CHEBI:57540"/>
        <dbReference type="ChEBI" id="CHEBI:57945"/>
        <dbReference type="ChEBI" id="CHEBI:58351"/>
        <dbReference type="ChEBI" id="CHEBI:58827"/>
        <dbReference type="EC" id="1.3.1.76"/>
    </reaction>
</comment>
<comment type="catalytic activity">
    <reaction evidence="1">
        <text>siroheme + 2 H(+) = sirohydrochlorin + Fe(2+)</text>
        <dbReference type="Rhea" id="RHEA:24360"/>
        <dbReference type="ChEBI" id="CHEBI:15378"/>
        <dbReference type="ChEBI" id="CHEBI:29033"/>
        <dbReference type="ChEBI" id="CHEBI:58351"/>
        <dbReference type="ChEBI" id="CHEBI:60052"/>
        <dbReference type="EC" id="4.99.1.4"/>
    </reaction>
</comment>
<comment type="pathway">
    <text evidence="1">Cofactor biosynthesis; adenosylcobalamin biosynthesis; precorrin-2 from uroporphyrinogen III: step 1/1.</text>
</comment>
<comment type="pathway">
    <text evidence="1">Cofactor biosynthesis; adenosylcobalamin biosynthesis; sirohydrochlorin from precorrin-2: step 1/1.</text>
</comment>
<comment type="pathway">
    <text evidence="1">Porphyrin-containing compound metabolism; siroheme biosynthesis; precorrin-2 from uroporphyrinogen III: step 1/1.</text>
</comment>
<comment type="pathway">
    <text evidence="1">Porphyrin-containing compound metabolism; siroheme biosynthesis; siroheme from sirohydrochlorin: step 1/1.</text>
</comment>
<comment type="pathway">
    <text evidence="1">Porphyrin-containing compound metabolism; siroheme biosynthesis; sirohydrochlorin from precorrin-2: step 1/1.</text>
</comment>
<comment type="similarity">
    <text evidence="1">In the N-terminal section; belongs to the precorrin-2 dehydrogenase / sirohydrochlorin ferrochelatase family.</text>
</comment>
<comment type="similarity">
    <text evidence="1">In the C-terminal section; belongs to the precorrin methyltransferase family.</text>
</comment>
<name>CYSG_PSEA8</name>
<feature type="chain" id="PRO_1000186948" description="Siroheme synthase">
    <location>
        <begin position="1"/>
        <end position="465"/>
    </location>
</feature>
<feature type="region of interest" description="Precorrin-2 dehydrogenase /sirohydrochlorin ferrochelatase" evidence="1">
    <location>
        <begin position="1"/>
        <end position="203"/>
    </location>
</feature>
<feature type="region of interest" description="Uroporphyrinogen-III C-methyltransferase" evidence="1">
    <location>
        <begin position="217"/>
        <end position="465"/>
    </location>
</feature>
<feature type="active site" description="Proton acceptor" evidence="1">
    <location>
        <position position="249"/>
    </location>
</feature>
<feature type="active site" description="Proton donor" evidence="1">
    <location>
        <position position="271"/>
    </location>
</feature>
<feature type="binding site" evidence="1">
    <location>
        <begin position="22"/>
        <end position="23"/>
    </location>
    <ligand>
        <name>NAD(+)</name>
        <dbReference type="ChEBI" id="CHEBI:57540"/>
    </ligand>
</feature>
<feature type="binding site" evidence="1">
    <location>
        <begin position="43"/>
        <end position="44"/>
    </location>
    <ligand>
        <name>NAD(+)</name>
        <dbReference type="ChEBI" id="CHEBI:57540"/>
    </ligand>
</feature>
<feature type="binding site" evidence="1">
    <location>
        <position position="226"/>
    </location>
    <ligand>
        <name>S-adenosyl-L-methionine</name>
        <dbReference type="ChEBI" id="CHEBI:59789"/>
    </ligand>
</feature>
<feature type="binding site" evidence="1">
    <location>
        <begin position="302"/>
        <end position="304"/>
    </location>
    <ligand>
        <name>S-adenosyl-L-methionine</name>
        <dbReference type="ChEBI" id="CHEBI:59789"/>
    </ligand>
</feature>
<feature type="binding site" evidence="1">
    <location>
        <position position="307"/>
    </location>
    <ligand>
        <name>S-adenosyl-L-methionine</name>
        <dbReference type="ChEBI" id="CHEBI:59789"/>
    </ligand>
</feature>
<feature type="binding site" evidence="1">
    <location>
        <begin position="332"/>
        <end position="333"/>
    </location>
    <ligand>
        <name>S-adenosyl-L-methionine</name>
        <dbReference type="ChEBI" id="CHEBI:59789"/>
    </ligand>
</feature>
<feature type="binding site" evidence="1">
    <location>
        <position position="384"/>
    </location>
    <ligand>
        <name>S-adenosyl-L-methionine</name>
        <dbReference type="ChEBI" id="CHEBI:59789"/>
    </ligand>
</feature>
<feature type="binding site" evidence="1">
    <location>
        <position position="413"/>
    </location>
    <ligand>
        <name>S-adenosyl-L-methionine</name>
        <dbReference type="ChEBI" id="CHEBI:59789"/>
    </ligand>
</feature>
<feature type="modified residue" description="Phosphoserine" evidence="1">
    <location>
        <position position="128"/>
    </location>
</feature>
<organism>
    <name type="scientific">Pseudomonas aeruginosa (strain LESB58)</name>
    <dbReference type="NCBI Taxonomy" id="557722"/>
    <lineage>
        <taxon>Bacteria</taxon>
        <taxon>Pseudomonadati</taxon>
        <taxon>Pseudomonadota</taxon>
        <taxon>Gammaproteobacteria</taxon>
        <taxon>Pseudomonadales</taxon>
        <taxon>Pseudomonadaceae</taxon>
        <taxon>Pseudomonas</taxon>
    </lineage>
</organism>
<dbReference type="EC" id="2.1.1.107" evidence="1"/>
<dbReference type="EC" id="1.3.1.76" evidence="1"/>
<dbReference type="EC" id="4.99.1.4" evidence="1"/>
<dbReference type="EMBL" id="FM209186">
    <property type="protein sequence ID" value="CAW27220.1"/>
    <property type="molecule type" value="Genomic_DNA"/>
</dbReference>
<dbReference type="RefSeq" id="WP_003160439.1">
    <property type="nucleotide sequence ID" value="NC_011770.1"/>
</dbReference>
<dbReference type="SMR" id="B7UW11"/>
<dbReference type="KEGG" id="pag:PLES_24941"/>
<dbReference type="HOGENOM" id="CLU_011276_2_1_6"/>
<dbReference type="UniPathway" id="UPA00148">
    <property type="reaction ID" value="UER00211"/>
</dbReference>
<dbReference type="UniPathway" id="UPA00148">
    <property type="reaction ID" value="UER00222"/>
</dbReference>
<dbReference type="UniPathway" id="UPA00262">
    <property type="reaction ID" value="UER00211"/>
</dbReference>
<dbReference type="UniPathway" id="UPA00262">
    <property type="reaction ID" value="UER00222"/>
</dbReference>
<dbReference type="UniPathway" id="UPA00262">
    <property type="reaction ID" value="UER00376"/>
</dbReference>
<dbReference type="GO" id="GO:0051287">
    <property type="term" value="F:NAD binding"/>
    <property type="evidence" value="ECO:0007669"/>
    <property type="project" value="InterPro"/>
</dbReference>
<dbReference type="GO" id="GO:0043115">
    <property type="term" value="F:precorrin-2 dehydrogenase activity"/>
    <property type="evidence" value="ECO:0007669"/>
    <property type="project" value="UniProtKB-UniRule"/>
</dbReference>
<dbReference type="GO" id="GO:0051266">
    <property type="term" value="F:sirohydrochlorin ferrochelatase activity"/>
    <property type="evidence" value="ECO:0007669"/>
    <property type="project" value="UniProtKB-EC"/>
</dbReference>
<dbReference type="GO" id="GO:0004851">
    <property type="term" value="F:uroporphyrin-III C-methyltransferase activity"/>
    <property type="evidence" value="ECO:0007669"/>
    <property type="project" value="UniProtKB-UniRule"/>
</dbReference>
<dbReference type="GO" id="GO:0009236">
    <property type="term" value="P:cobalamin biosynthetic process"/>
    <property type="evidence" value="ECO:0007669"/>
    <property type="project" value="UniProtKB-UniRule"/>
</dbReference>
<dbReference type="GO" id="GO:0032259">
    <property type="term" value="P:methylation"/>
    <property type="evidence" value="ECO:0007669"/>
    <property type="project" value="UniProtKB-KW"/>
</dbReference>
<dbReference type="GO" id="GO:0019354">
    <property type="term" value="P:siroheme biosynthetic process"/>
    <property type="evidence" value="ECO:0007669"/>
    <property type="project" value="UniProtKB-UniRule"/>
</dbReference>
<dbReference type="CDD" id="cd11642">
    <property type="entry name" value="SUMT"/>
    <property type="match status" value="1"/>
</dbReference>
<dbReference type="FunFam" id="3.30.160.110:FF:000001">
    <property type="entry name" value="Siroheme synthase"/>
    <property type="match status" value="1"/>
</dbReference>
<dbReference type="FunFam" id="3.30.950.10:FF:000001">
    <property type="entry name" value="Siroheme synthase"/>
    <property type="match status" value="1"/>
</dbReference>
<dbReference type="FunFam" id="3.40.1010.10:FF:000001">
    <property type="entry name" value="Siroheme synthase"/>
    <property type="match status" value="1"/>
</dbReference>
<dbReference type="Gene3D" id="3.40.1010.10">
    <property type="entry name" value="Cobalt-precorrin-4 Transmethylase, Domain 1"/>
    <property type="match status" value="1"/>
</dbReference>
<dbReference type="Gene3D" id="3.30.950.10">
    <property type="entry name" value="Methyltransferase, Cobalt-precorrin-4 Transmethylase, Domain 2"/>
    <property type="match status" value="1"/>
</dbReference>
<dbReference type="Gene3D" id="3.40.50.720">
    <property type="entry name" value="NAD(P)-binding Rossmann-like Domain"/>
    <property type="match status" value="1"/>
</dbReference>
<dbReference type="Gene3D" id="1.10.8.210">
    <property type="entry name" value="Sirohaem synthase, dimerisation domain"/>
    <property type="match status" value="1"/>
</dbReference>
<dbReference type="Gene3D" id="3.30.160.110">
    <property type="entry name" value="Siroheme synthase, domain 2"/>
    <property type="match status" value="1"/>
</dbReference>
<dbReference type="HAMAP" id="MF_01646">
    <property type="entry name" value="Siroheme_synth"/>
    <property type="match status" value="1"/>
</dbReference>
<dbReference type="InterPro" id="IPR000878">
    <property type="entry name" value="4pyrrol_Mease"/>
</dbReference>
<dbReference type="InterPro" id="IPR035996">
    <property type="entry name" value="4pyrrol_Methylase_sf"/>
</dbReference>
<dbReference type="InterPro" id="IPR014777">
    <property type="entry name" value="4pyrrole_Mease_sub1"/>
</dbReference>
<dbReference type="InterPro" id="IPR014776">
    <property type="entry name" value="4pyrrole_Mease_sub2"/>
</dbReference>
<dbReference type="InterPro" id="IPR006366">
    <property type="entry name" value="CobA/CysG_C"/>
</dbReference>
<dbReference type="InterPro" id="IPR036291">
    <property type="entry name" value="NAD(P)-bd_dom_sf"/>
</dbReference>
<dbReference type="InterPro" id="IPR050161">
    <property type="entry name" value="Siro_Cobalamin_biosynth"/>
</dbReference>
<dbReference type="InterPro" id="IPR037115">
    <property type="entry name" value="Sirohaem_synt_dimer_dom_sf"/>
</dbReference>
<dbReference type="InterPro" id="IPR012409">
    <property type="entry name" value="Sirohaem_synth"/>
</dbReference>
<dbReference type="InterPro" id="IPR028281">
    <property type="entry name" value="Sirohaem_synthase_central"/>
</dbReference>
<dbReference type="InterPro" id="IPR019478">
    <property type="entry name" value="Sirohaem_synthase_dimer_dom"/>
</dbReference>
<dbReference type="InterPro" id="IPR006367">
    <property type="entry name" value="Sirohaem_synthase_N"/>
</dbReference>
<dbReference type="InterPro" id="IPR003043">
    <property type="entry name" value="Uropor_MeTrfase_CS"/>
</dbReference>
<dbReference type="NCBIfam" id="TIGR01469">
    <property type="entry name" value="cobA_cysG_Cterm"/>
    <property type="match status" value="1"/>
</dbReference>
<dbReference type="NCBIfam" id="TIGR01470">
    <property type="entry name" value="cysG_Nterm"/>
    <property type="match status" value="1"/>
</dbReference>
<dbReference type="NCBIfam" id="NF004790">
    <property type="entry name" value="PRK06136.1"/>
    <property type="match status" value="1"/>
</dbReference>
<dbReference type="NCBIfam" id="NF007922">
    <property type="entry name" value="PRK10637.1"/>
    <property type="match status" value="1"/>
</dbReference>
<dbReference type="PANTHER" id="PTHR45790:SF1">
    <property type="entry name" value="SIROHEME SYNTHASE"/>
    <property type="match status" value="1"/>
</dbReference>
<dbReference type="PANTHER" id="PTHR45790">
    <property type="entry name" value="SIROHEME SYNTHASE-RELATED"/>
    <property type="match status" value="1"/>
</dbReference>
<dbReference type="Pfam" id="PF10414">
    <property type="entry name" value="CysG_dimeriser"/>
    <property type="match status" value="1"/>
</dbReference>
<dbReference type="Pfam" id="PF13241">
    <property type="entry name" value="NAD_binding_7"/>
    <property type="match status" value="1"/>
</dbReference>
<dbReference type="Pfam" id="PF14824">
    <property type="entry name" value="Sirohm_synth_M"/>
    <property type="match status" value="1"/>
</dbReference>
<dbReference type="Pfam" id="PF00590">
    <property type="entry name" value="TP_methylase"/>
    <property type="match status" value="1"/>
</dbReference>
<dbReference type="PIRSF" id="PIRSF036426">
    <property type="entry name" value="Sirohaem_synth"/>
    <property type="match status" value="1"/>
</dbReference>
<dbReference type="SUPFAM" id="SSF51735">
    <property type="entry name" value="NAD(P)-binding Rossmann-fold domains"/>
    <property type="match status" value="1"/>
</dbReference>
<dbReference type="SUPFAM" id="SSF75615">
    <property type="entry name" value="Siroheme synthase middle domains-like"/>
    <property type="match status" value="1"/>
</dbReference>
<dbReference type="SUPFAM" id="SSF53790">
    <property type="entry name" value="Tetrapyrrole methylase"/>
    <property type="match status" value="1"/>
</dbReference>
<dbReference type="PROSITE" id="PS00840">
    <property type="entry name" value="SUMT_2"/>
    <property type="match status" value="1"/>
</dbReference>